<sequence length="179" mass="19558">MQQNIIKVIVGSKNPVKINAAANAMALLFPEYEIQTQGMDAPSGVPAQPMTDSDTRQGAINRVHYCQQQIEADYYFAMEGGVDCFEFGPATFAYIAIAHQARLSIGRGALLPLPMQVYQALEAGEELGHVMDRLFNTVNIKQKGGAIGLLTRGHATRESNYTQAIILAMAPFLNPELYP</sequence>
<reference key="1">
    <citation type="submission" date="2006-08" db="EMBL/GenBank/DDBJ databases">
        <title>Complete sequence of Shewanella sp. MR-4.</title>
        <authorList>
            <consortium name="US DOE Joint Genome Institute"/>
            <person name="Copeland A."/>
            <person name="Lucas S."/>
            <person name="Lapidus A."/>
            <person name="Barry K."/>
            <person name="Detter J.C."/>
            <person name="Glavina del Rio T."/>
            <person name="Hammon N."/>
            <person name="Israni S."/>
            <person name="Dalin E."/>
            <person name="Tice H."/>
            <person name="Pitluck S."/>
            <person name="Kiss H."/>
            <person name="Brettin T."/>
            <person name="Bruce D."/>
            <person name="Han C."/>
            <person name="Tapia R."/>
            <person name="Gilna P."/>
            <person name="Schmutz J."/>
            <person name="Larimer F."/>
            <person name="Land M."/>
            <person name="Hauser L."/>
            <person name="Kyrpides N."/>
            <person name="Mikhailova N."/>
            <person name="Nealson K."/>
            <person name="Konstantinidis K."/>
            <person name="Klappenbach J."/>
            <person name="Tiedje J."/>
            <person name="Richardson P."/>
        </authorList>
    </citation>
    <scope>NUCLEOTIDE SEQUENCE [LARGE SCALE GENOMIC DNA]</scope>
    <source>
        <strain>MR-4</strain>
    </source>
</reference>
<name>NCPP_SHESM</name>
<comment type="function">
    <text evidence="1">Phosphatase that hydrolyzes non-canonical purine nucleotides such as XTP and ITP to their respective diphosphate derivatives. Probably excludes non-canonical purines from DNA/RNA precursor pool, thus preventing their incorporation into DNA/RNA and avoiding chromosomal lesions.</text>
</comment>
<comment type="catalytic activity">
    <reaction evidence="1">
        <text>XTP + H2O = XDP + phosphate + H(+)</text>
        <dbReference type="Rhea" id="RHEA:28406"/>
        <dbReference type="ChEBI" id="CHEBI:15377"/>
        <dbReference type="ChEBI" id="CHEBI:15378"/>
        <dbReference type="ChEBI" id="CHEBI:43474"/>
        <dbReference type="ChEBI" id="CHEBI:59884"/>
        <dbReference type="ChEBI" id="CHEBI:61314"/>
        <dbReference type="EC" id="3.6.1.73"/>
    </reaction>
</comment>
<comment type="catalytic activity">
    <reaction evidence="1">
        <text>ITP + H2O = IDP + phosphate + H(+)</text>
        <dbReference type="Rhea" id="RHEA:28330"/>
        <dbReference type="ChEBI" id="CHEBI:15377"/>
        <dbReference type="ChEBI" id="CHEBI:15378"/>
        <dbReference type="ChEBI" id="CHEBI:43474"/>
        <dbReference type="ChEBI" id="CHEBI:58280"/>
        <dbReference type="ChEBI" id="CHEBI:61402"/>
        <dbReference type="EC" id="3.6.1.73"/>
    </reaction>
</comment>
<comment type="cofactor">
    <cofactor evidence="1">
        <name>Mg(2+)</name>
        <dbReference type="ChEBI" id="CHEBI:18420"/>
    </cofactor>
    <cofactor evidence="1">
        <name>Mn(2+)</name>
        <dbReference type="ChEBI" id="CHEBI:29035"/>
    </cofactor>
    <text evidence="1">Binds 1 divalent metal cation per subunit; can use either Mg(2+) or Mn(2+).</text>
</comment>
<comment type="subunit">
    <text evidence="1">Homodimer.</text>
</comment>
<comment type="similarity">
    <text evidence="1">Belongs to the YjjX NTPase family.</text>
</comment>
<dbReference type="EC" id="3.6.1.73" evidence="1"/>
<dbReference type="EMBL" id="CP000446">
    <property type="protein sequence ID" value="ABI37839.1"/>
    <property type="molecule type" value="Genomic_DNA"/>
</dbReference>
<dbReference type="RefSeq" id="WP_011621554.1">
    <property type="nucleotide sequence ID" value="NC_008321.1"/>
</dbReference>
<dbReference type="SMR" id="Q0HM78"/>
<dbReference type="KEGG" id="she:Shewmr4_0759"/>
<dbReference type="HOGENOM" id="CLU_087417_1_0_6"/>
<dbReference type="GO" id="GO:0103023">
    <property type="term" value="F:ITPase activity"/>
    <property type="evidence" value="ECO:0007669"/>
    <property type="project" value="UniProtKB-EC"/>
</dbReference>
<dbReference type="GO" id="GO:0046872">
    <property type="term" value="F:metal ion binding"/>
    <property type="evidence" value="ECO:0007669"/>
    <property type="project" value="UniProtKB-KW"/>
</dbReference>
<dbReference type="GO" id="GO:0000166">
    <property type="term" value="F:nucleotide binding"/>
    <property type="evidence" value="ECO:0007669"/>
    <property type="project" value="UniProtKB-KW"/>
</dbReference>
<dbReference type="GO" id="GO:0017111">
    <property type="term" value="F:ribonucleoside triphosphate phosphatase activity"/>
    <property type="evidence" value="ECO:0000250"/>
    <property type="project" value="UniProtKB"/>
</dbReference>
<dbReference type="GO" id="GO:0009117">
    <property type="term" value="P:nucleotide metabolic process"/>
    <property type="evidence" value="ECO:0007669"/>
    <property type="project" value="UniProtKB-KW"/>
</dbReference>
<dbReference type="GO" id="GO:0006772">
    <property type="term" value="P:thiamine metabolic process"/>
    <property type="evidence" value="ECO:0007669"/>
    <property type="project" value="TreeGrafter"/>
</dbReference>
<dbReference type="FunFam" id="3.90.950.10:FF:000002">
    <property type="entry name" value="Inosine/xanthosine triphosphatase"/>
    <property type="match status" value="1"/>
</dbReference>
<dbReference type="Gene3D" id="3.90.950.10">
    <property type="match status" value="1"/>
</dbReference>
<dbReference type="HAMAP" id="MF_00648">
    <property type="entry name" value="Non_canon_purine_NTPase_YjjX"/>
    <property type="match status" value="1"/>
</dbReference>
<dbReference type="InterPro" id="IPR029001">
    <property type="entry name" value="ITPase-like_fam"/>
</dbReference>
<dbReference type="InterPro" id="IPR002786">
    <property type="entry name" value="Non_canon_purine_NTPase"/>
</dbReference>
<dbReference type="InterPro" id="IPR026533">
    <property type="entry name" value="NTPase/PRRC1"/>
</dbReference>
<dbReference type="InterPro" id="IPR050299">
    <property type="entry name" value="YjjX_NTPase"/>
</dbReference>
<dbReference type="NCBIfam" id="TIGR00258">
    <property type="entry name" value="inosine/xanthosine triphosphatase"/>
    <property type="match status" value="1"/>
</dbReference>
<dbReference type="NCBIfam" id="NF003459">
    <property type="entry name" value="PRK05074.1"/>
    <property type="match status" value="1"/>
</dbReference>
<dbReference type="PANTHER" id="PTHR34699">
    <property type="match status" value="1"/>
</dbReference>
<dbReference type="PANTHER" id="PTHR34699:SF2">
    <property type="entry name" value="NON-CANONICAL PURINE NTP PHOSPHATASE_PRRC1 DOMAIN-CONTAINING PROTEIN"/>
    <property type="match status" value="1"/>
</dbReference>
<dbReference type="Pfam" id="PF01931">
    <property type="entry name" value="NTPase_I-T"/>
    <property type="match status" value="1"/>
</dbReference>
<dbReference type="SUPFAM" id="SSF52972">
    <property type="entry name" value="ITPase-like"/>
    <property type="match status" value="1"/>
</dbReference>
<feature type="chain" id="PRO_1000056959" description="Inosine/xanthosine triphosphatase">
    <location>
        <begin position="1"/>
        <end position="179"/>
    </location>
</feature>
<feature type="binding site" evidence="1">
    <location>
        <begin position="71"/>
        <end position="72"/>
    </location>
    <ligand>
        <name>substrate</name>
    </ligand>
</feature>
<feature type="binding site" evidence="1">
    <location>
        <position position="71"/>
    </location>
    <ligand>
        <name>Mg(2+)</name>
        <dbReference type="ChEBI" id="CHEBI:18420"/>
    </ligand>
</feature>
<proteinExistence type="inferred from homology"/>
<organism>
    <name type="scientific">Shewanella sp. (strain MR-4)</name>
    <dbReference type="NCBI Taxonomy" id="60480"/>
    <lineage>
        <taxon>Bacteria</taxon>
        <taxon>Pseudomonadati</taxon>
        <taxon>Pseudomonadota</taxon>
        <taxon>Gammaproteobacteria</taxon>
        <taxon>Alteromonadales</taxon>
        <taxon>Shewanellaceae</taxon>
        <taxon>Shewanella</taxon>
    </lineage>
</organism>
<protein>
    <recommendedName>
        <fullName evidence="1">Inosine/xanthosine triphosphatase</fullName>
        <shortName evidence="1">ITPase/XTPase</shortName>
        <ecNumber evidence="1">3.6.1.73</ecNumber>
    </recommendedName>
    <alternativeName>
        <fullName evidence="1">Non-canonical purine NTP phosphatase</fullName>
    </alternativeName>
    <alternativeName>
        <fullName evidence="1">Non-standard purine NTP phosphatase</fullName>
    </alternativeName>
    <alternativeName>
        <fullName evidence="1">Nucleoside-triphosphate phosphatase</fullName>
        <shortName evidence="1">NTPase</shortName>
    </alternativeName>
</protein>
<accession>Q0HM78</accession>
<evidence type="ECO:0000255" key="1">
    <source>
        <dbReference type="HAMAP-Rule" id="MF_00648"/>
    </source>
</evidence>
<keyword id="KW-0378">Hydrolase</keyword>
<keyword id="KW-0460">Magnesium</keyword>
<keyword id="KW-0464">Manganese</keyword>
<keyword id="KW-0479">Metal-binding</keyword>
<keyword id="KW-0546">Nucleotide metabolism</keyword>
<keyword id="KW-0547">Nucleotide-binding</keyword>
<gene>
    <name type="ordered locus">Shewmr4_0759</name>
</gene>